<evidence type="ECO:0000250" key="1"/>
<evidence type="ECO:0000250" key="2">
    <source>
        <dbReference type="UniProtKB" id="Q9BR76"/>
    </source>
</evidence>
<evidence type="ECO:0000255" key="3"/>
<evidence type="ECO:0000256" key="4">
    <source>
        <dbReference type="SAM" id="MobiDB-lite"/>
    </source>
</evidence>
<evidence type="ECO:0000305" key="5"/>
<protein>
    <recommendedName>
        <fullName>Coronin-1B</fullName>
    </recommendedName>
    <alternativeName>
        <fullName>Coronin-like protein pp66</fullName>
    </alternativeName>
    <alternativeName>
        <fullName>Coroninse</fullName>
    </alternativeName>
</protein>
<reference key="1">
    <citation type="journal article" date="1999" name="J. Biol. Chem.">
        <title>Isolation, cloning, and characterization of a new mammalian coronin family member, coroninse, which is regulated within the protein kinase C signaling pathway.</title>
        <authorList>
            <person name="Parente J.A. Jr."/>
            <person name="Chen X."/>
            <person name="Zhou C."/>
            <person name="Petropoulos A.C."/>
            <person name="Chew C.S."/>
        </authorList>
    </citation>
    <scope>NUCLEOTIDE SEQUENCE [MRNA]</scope>
    <scope>BINDING TO ACTIN</scope>
    <scope>PHOSPHORYLATION</scope>
    <source>
        <strain>New Zealand white</strain>
        <tissue>Gastric mucosa</tissue>
    </source>
</reference>
<feature type="chain" id="PRO_0000050924" description="Coronin-1B">
    <location>
        <begin position="1"/>
        <end position="486"/>
    </location>
</feature>
<feature type="repeat" description="WD 1">
    <location>
        <begin position="80"/>
        <end position="120"/>
    </location>
</feature>
<feature type="repeat" description="WD 2">
    <location>
        <begin position="130"/>
        <end position="170"/>
    </location>
</feature>
<feature type="repeat" description="WD 3">
    <location>
        <begin position="174"/>
        <end position="213"/>
    </location>
</feature>
<feature type="repeat" description="WD 4">
    <location>
        <begin position="217"/>
        <end position="260"/>
    </location>
</feature>
<feature type="repeat" description="WD 5">
    <location>
        <begin position="265"/>
        <end position="305"/>
    </location>
</feature>
<feature type="region of interest" description="Disordered" evidence="4">
    <location>
        <begin position="404"/>
        <end position="444"/>
    </location>
</feature>
<feature type="coiled-coil region" evidence="3">
    <location>
        <begin position="446"/>
        <end position="484"/>
    </location>
</feature>
<feature type="compositionally biased region" description="Low complexity" evidence="4">
    <location>
        <begin position="432"/>
        <end position="444"/>
    </location>
</feature>
<feature type="modified residue" description="Phosphoserine; by PKC" evidence="2">
    <location>
        <position position="2"/>
    </location>
</feature>
<accession>Q9XS70</accession>
<keyword id="KW-0009">Actin-binding</keyword>
<keyword id="KW-0175">Coiled coil</keyword>
<keyword id="KW-0963">Cytoplasm</keyword>
<keyword id="KW-0206">Cytoskeleton</keyword>
<keyword id="KW-0597">Phosphoprotein</keyword>
<keyword id="KW-1185">Reference proteome</keyword>
<keyword id="KW-0677">Repeat</keyword>
<keyword id="KW-0853">WD repeat</keyword>
<proteinExistence type="evidence at protein level"/>
<comment type="function">
    <text evidence="1">Regulates leading edge dynamics and cell motility in fibroblasts. May be involved in cytokinesis and signal transduction (By similarity).</text>
</comment>
<comment type="subunit">
    <text evidence="1">Forms homooligomers, but does not form complexes with the other coronins. Interacts with Arp2/3 complex components, including ACTR2, ARPC1B and ARPC2 (By similarity). Binds actin.</text>
</comment>
<comment type="subcellular location">
    <subcellularLocation>
        <location evidence="2">Cytoplasm</location>
        <location evidence="2">Cytoskeleton</location>
    </subcellularLocation>
    <subcellularLocation>
        <location evidence="2">Cytoplasm</location>
        <location evidence="2">Cytoskeleton</location>
        <location evidence="2">Stress fiber</location>
    </subcellularLocation>
    <text evidence="2">Localized to the leading edge in fibroblasts, as well as weakly along actin stress fibers.</text>
</comment>
<comment type="PTM">
    <text evidence="2">Phosphorylated in vivo by PKC in response to cholinergic stimulation. Phosphorylation on Ser-2 regulates the interaction with the Arp2/3 complex and cell motility in fibroblasts. Phosphorylation does not seem to affect subcellular location (By similarity).</text>
</comment>
<comment type="similarity">
    <text evidence="5">Belongs to the WD repeat coronin family.</text>
</comment>
<organism>
    <name type="scientific">Oryctolagus cuniculus</name>
    <name type="common">Rabbit</name>
    <dbReference type="NCBI Taxonomy" id="9986"/>
    <lineage>
        <taxon>Eukaryota</taxon>
        <taxon>Metazoa</taxon>
        <taxon>Chordata</taxon>
        <taxon>Craniata</taxon>
        <taxon>Vertebrata</taxon>
        <taxon>Euteleostomi</taxon>
        <taxon>Mammalia</taxon>
        <taxon>Eutheria</taxon>
        <taxon>Euarchontoglires</taxon>
        <taxon>Glires</taxon>
        <taxon>Lagomorpha</taxon>
        <taxon>Leporidae</taxon>
        <taxon>Oryctolagus</taxon>
    </lineage>
</organism>
<sequence length="486" mass="53609">MSFRKVVRQSKFRHVFGQPVKNDQCYEDIRVSRVTWDSTFCAVNPKFLAVIVEASGGGAFLVLPLSKTGRIDKAYPTVCGHTGPVLDIEWCPHNDGVIASGSEDCTVMVWQIPEDGLTSPLTEPVVVLEGHTKRVGIVTWHPTARNVLLSAGCDNVVLIWNVGTAEELYRLDSLHPDLIYNVSWNRNGSLFCSACKDKSVRIIDPRRGTLVAEREKAHEGARPMRAIFLADGKVFTTGFSRMSERQLALWDPENLEEPMALQELDSSNGALLPFYDPDTSVVYVCGKGDSSIRYFEITDEPPYIHFLNTFTSKEPQRGVGSMPKRGLEVSKCEIARFYKLHERKCEPIVMTVPRKSDLFQDDLYPDTAGPEAALEAEEWVSGRDAGPVLISLREAYVPSKQRDLKVSRRNVLSDSRPTSAARPAAPAPAAPAPAAAASSSLSGAGEAGKLEEVMRELRALRALVKEQGERIGRLEEQLGRVENGDA</sequence>
<name>COR1B_RABIT</name>
<dbReference type="EMBL" id="AF056312">
    <property type="protein sequence ID" value="AAD23736.1"/>
    <property type="molecule type" value="mRNA"/>
</dbReference>
<dbReference type="RefSeq" id="NP_001076156.1">
    <property type="nucleotide sequence ID" value="NM_001082687.1"/>
</dbReference>
<dbReference type="SMR" id="Q9XS70"/>
<dbReference type="FunCoup" id="Q9XS70">
    <property type="interactions" value="885"/>
</dbReference>
<dbReference type="GeneID" id="100009415"/>
<dbReference type="KEGG" id="ocu:100009415"/>
<dbReference type="CTD" id="57175"/>
<dbReference type="InParanoid" id="Q9XS70"/>
<dbReference type="OrthoDB" id="1850764at2759"/>
<dbReference type="Proteomes" id="UP000001811">
    <property type="component" value="Unplaced"/>
</dbReference>
<dbReference type="GO" id="GO:0005737">
    <property type="term" value="C:cytoplasm"/>
    <property type="evidence" value="ECO:0007669"/>
    <property type="project" value="UniProtKB-KW"/>
</dbReference>
<dbReference type="GO" id="GO:0001725">
    <property type="term" value="C:stress fiber"/>
    <property type="evidence" value="ECO:0007669"/>
    <property type="project" value="UniProtKB-SubCell"/>
</dbReference>
<dbReference type="GO" id="GO:0051015">
    <property type="term" value="F:actin filament binding"/>
    <property type="evidence" value="ECO:0007669"/>
    <property type="project" value="TreeGrafter"/>
</dbReference>
<dbReference type="GO" id="GO:0007015">
    <property type="term" value="P:actin filament organization"/>
    <property type="evidence" value="ECO:0007669"/>
    <property type="project" value="TreeGrafter"/>
</dbReference>
<dbReference type="GO" id="GO:0016477">
    <property type="term" value="P:cell migration"/>
    <property type="evidence" value="ECO:0007669"/>
    <property type="project" value="TreeGrafter"/>
</dbReference>
<dbReference type="FunFam" id="2.130.10.10:FF:000003">
    <property type="entry name" value="Coronin"/>
    <property type="match status" value="1"/>
</dbReference>
<dbReference type="Gene3D" id="2.130.10.10">
    <property type="entry name" value="YVTN repeat-like/Quinoprotein amine dehydrogenase"/>
    <property type="match status" value="1"/>
</dbReference>
<dbReference type="InterPro" id="IPR015505">
    <property type="entry name" value="Coronin"/>
</dbReference>
<dbReference type="InterPro" id="IPR015048">
    <property type="entry name" value="DUF1899"/>
</dbReference>
<dbReference type="InterPro" id="IPR015943">
    <property type="entry name" value="WD40/YVTN_repeat-like_dom_sf"/>
</dbReference>
<dbReference type="InterPro" id="IPR019775">
    <property type="entry name" value="WD40_repeat_CS"/>
</dbReference>
<dbReference type="InterPro" id="IPR036322">
    <property type="entry name" value="WD40_repeat_dom_sf"/>
</dbReference>
<dbReference type="InterPro" id="IPR001680">
    <property type="entry name" value="WD40_rpt"/>
</dbReference>
<dbReference type="PANTHER" id="PTHR10856">
    <property type="entry name" value="CORONIN"/>
    <property type="match status" value="1"/>
</dbReference>
<dbReference type="PANTHER" id="PTHR10856:SF24">
    <property type="entry name" value="CORONIN-1B"/>
    <property type="match status" value="1"/>
</dbReference>
<dbReference type="Pfam" id="PF08953">
    <property type="entry name" value="DUF1899"/>
    <property type="match status" value="1"/>
</dbReference>
<dbReference type="Pfam" id="PF00400">
    <property type="entry name" value="WD40"/>
    <property type="match status" value="3"/>
</dbReference>
<dbReference type="Pfam" id="PF16300">
    <property type="entry name" value="WD40_4"/>
    <property type="match status" value="1"/>
</dbReference>
<dbReference type="SMART" id="SM01166">
    <property type="entry name" value="DUF1899"/>
    <property type="match status" value="1"/>
</dbReference>
<dbReference type="SMART" id="SM01167">
    <property type="entry name" value="DUF1900"/>
    <property type="match status" value="1"/>
</dbReference>
<dbReference type="SMART" id="SM00320">
    <property type="entry name" value="WD40"/>
    <property type="match status" value="3"/>
</dbReference>
<dbReference type="SUPFAM" id="SSF50978">
    <property type="entry name" value="WD40 repeat-like"/>
    <property type="match status" value="1"/>
</dbReference>
<dbReference type="PROSITE" id="PS00678">
    <property type="entry name" value="WD_REPEATS_1"/>
    <property type="match status" value="1"/>
</dbReference>
<dbReference type="PROSITE" id="PS50082">
    <property type="entry name" value="WD_REPEATS_2"/>
    <property type="match status" value="2"/>
</dbReference>
<dbReference type="PROSITE" id="PS50294">
    <property type="entry name" value="WD_REPEATS_REGION"/>
    <property type="match status" value="1"/>
</dbReference>
<gene>
    <name type="primary">CORO1B</name>
</gene>